<keyword id="KW-0131">Cell cycle</keyword>
<keyword id="KW-0132">Cell division</keyword>
<keyword id="KW-1003">Cell membrane</keyword>
<keyword id="KW-0175">Coiled coil</keyword>
<keyword id="KW-0472">Membrane</keyword>
<keyword id="KW-1185">Reference proteome</keyword>
<keyword id="KW-0717">Septation</keyword>
<keyword id="KW-0812">Transmembrane</keyword>
<keyword id="KW-1133">Transmembrane helix</keyword>
<reference key="1">
    <citation type="journal article" date="2007" name="J. Bacteriol.">
        <title>Genome of the opportunistic pathogen Streptococcus sanguinis.</title>
        <authorList>
            <person name="Xu P."/>
            <person name="Alves J.M."/>
            <person name="Kitten T."/>
            <person name="Brown A."/>
            <person name="Chen Z."/>
            <person name="Ozaki L.S."/>
            <person name="Manque P."/>
            <person name="Ge X."/>
            <person name="Serrano M.G."/>
            <person name="Puiu D."/>
            <person name="Hendricks S."/>
            <person name="Wang Y."/>
            <person name="Chaplin M.D."/>
            <person name="Akan D."/>
            <person name="Paik S."/>
            <person name="Peterson D.L."/>
            <person name="Macrina F.L."/>
            <person name="Buck G.A."/>
        </authorList>
    </citation>
    <scope>NUCLEOTIDE SEQUENCE [LARGE SCALE GENOMIC DNA]</scope>
    <source>
        <strain>SK36</strain>
    </source>
</reference>
<name>EZRA_STRSV</name>
<accession>A3CMA0</accession>
<proteinExistence type="inferred from homology"/>
<comment type="function">
    <text evidence="1">Negative regulator of FtsZ ring formation; modulates the frequency and position of FtsZ ring formation. Inhibits FtsZ ring formation at polar sites. Interacts either with FtsZ or with one of its binding partners to promote depolymerization.</text>
</comment>
<comment type="subcellular location">
    <subcellularLocation>
        <location evidence="1">Cell membrane</location>
        <topology evidence="1">Single-pass membrane protein</topology>
    </subcellularLocation>
    <text evidence="1">Colocalized with FtsZ to the nascent septal site.</text>
</comment>
<comment type="similarity">
    <text evidence="1">Belongs to the EzrA family.</text>
</comment>
<organism>
    <name type="scientific">Streptococcus sanguinis (strain SK36)</name>
    <dbReference type="NCBI Taxonomy" id="388919"/>
    <lineage>
        <taxon>Bacteria</taxon>
        <taxon>Bacillati</taxon>
        <taxon>Bacillota</taxon>
        <taxon>Bacilli</taxon>
        <taxon>Lactobacillales</taxon>
        <taxon>Streptococcaceae</taxon>
        <taxon>Streptococcus</taxon>
    </lineage>
</organism>
<gene>
    <name evidence="1" type="primary">ezrA</name>
    <name type="ordered locus">SSA_0879</name>
</gene>
<protein>
    <recommendedName>
        <fullName evidence="1">Septation ring formation regulator EzrA</fullName>
    </recommendedName>
</protein>
<sequence length="574" mass="65961">MSIGLVILVAVVALLLVVGYGTAVLMRKRNEALLQNLEERKEALYNLPVNDEVEEVKNMHLIGQSQVAFREWNQKWVDLSLNSFADIENNLFEAEGYNNSFRFIKAKHAIGNIESQIDLIEEDIKMIRAALEDLKEQESKNSGRVLHALDLFEKLQTQVAENADSYGQALAEIEKQLENIQSEFSQFVTLNSSGDPVEAAEILDKAEDHILALTHIVEKVPAIVEELTVKLPDQLEDLESGHRKLLESGYHFIETDIESRFQQLHASLKRNEANISALELDNAEYENEQAQEEINALYEIFTREIEAHKVVEKLIKNLPSYLAHTKENNQQLQKEIERLSQTFLISDTETSHVKELQAELSAQEDVVLSAVEDSSETKQAYSVVQEELEAIQERLKEIEDEQISLGEALAEIEKDDANARQKVNIYANKLHTIKRYMEKRNLPGIPDSFLEIFFSTSNNIEELVKELEATRVNIESVNRWLEILGNDMEQLEEETYRIVQDATLTEQLLQYSNRYRSFDDNVQAAFNKSLYVFEHDYDYAQSLEIISKALDLVEPGVTERFVTSYEKTRENIRF</sequence>
<dbReference type="EMBL" id="CP000387">
    <property type="protein sequence ID" value="ABN44305.1"/>
    <property type="molecule type" value="Genomic_DNA"/>
</dbReference>
<dbReference type="RefSeq" id="WP_011836769.1">
    <property type="nucleotide sequence ID" value="NC_009009.1"/>
</dbReference>
<dbReference type="RefSeq" id="YP_001034855.1">
    <property type="nucleotide sequence ID" value="NC_009009.1"/>
</dbReference>
<dbReference type="SMR" id="A3CMA0"/>
<dbReference type="STRING" id="388919.SSA_0879"/>
<dbReference type="KEGG" id="ssa:SSA_0879"/>
<dbReference type="PATRIC" id="fig|388919.9.peg.840"/>
<dbReference type="eggNOG" id="COG4477">
    <property type="taxonomic scope" value="Bacteria"/>
</dbReference>
<dbReference type="HOGENOM" id="CLU_034079_2_0_9"/>
<dbReference type="OrthoDB" id="1654473at2"/>
<dbReference type="Proteomes" id="UP000002148">
    <property type="component" value="Chromosome"/>
</dbReference>
<dbReference type="GO" id="GO:0005886">
    <property type="term" value="C:plasma membrane"/>
    <property type="evidence" value="ECO:0007669"/>
    <property type="project" value="UniProtKB-SubCell"/>
</dbReference>
<dbReference type="GO" id="GO:0005940">
    <property type="term" value="C:septin ring"/>
    <property type="evidence" value="ECO:0007669"/>
    <property type="project" value="InterPro"/>
</dbReference>
<dbReference type="GO" id="GO:0000917">
    <property type="term" value="P:division septum assembly"/>
    <property type="evidence" value="ECO:0007669"/>
    <property type="project" value="UniProtKB-KW"/>
</dbReference>
<dbReference type="GO" id="GO:0000921">
    <property type="term" value="P:septin ring assembly"/>
    <property type="evidence" value="ECO:0007669"/>
    <property type="project" value="InterPro"/>
</dbReference>
<dbReference type="HAMAP" id="MF_00728">
    <property type="entry name" value="EzrA"/>
    <property type="match status" value="1"/>
</dbReference>
<dbReference type="InterPro" id="IPR010379">
    <property type="entry name" value="EzrA"/>
</dbReference>
<dbReference type="NCBIfam" id="NF003410">
    <property type="entry name" value="PRK04778.1-4"/>
    <property type="match status" value="1"/>
</dbReference>
<dbReference type="Pfam" id="PF06160">
    <property type="entry name" value="EzrA"/>
    <property type="match status" value="1"/>
</dbReference>
<feature type="chain" id="PRO_1000045914" description="Septation ring formation regulator EzrA">
    <location>
        <begin position="1"/>
        <end position="574"/>
    </location>
</feature>
<feature type="topological domain" description="Extracellular" evidence="1">
    <location>
        <begin position="1"/>
        <end position="7"/>
    </location>
</feature>
<feature type="transmembrane region" description="Helical" evidence="1">
    <location>
        <begin position="8"/>
        <end position="26"/>
    </location>
</feature>
<feature type="topological domain" description="Cytoplasmic" evidence="1">
    <location>
        <begin position="27"/>
        <end position="574"/>
    </location>
</feature>
<feature type="coiled-coil region" evidence="1">
    <location>
        <begin position="26"/>
        <end position="47"/>
    </location>
</feature>
<feature type="coiled-coil region" evidence="1">
    <location>
        <begin position="105"/>
        <end position="189"/>
    </location>
</feature>
<feature type="coiled-coil region" evidence="1">
    <location>
        <begin position="258"/>
        <end position="346"/>
    </location>
</feature>
<feature type="coiled-coil region" evidence="1">
    <location>
        <begin position="375"/>
        <end position="415"/>
    </location>
</feature>
<feature type="coiled-coil region" evidence="1">
    <location>
        <begin position="455"/>
        <end position="494"/>
    </location>
</feature>
<evidence type="ECO:0000255" key="1">
    <source>
        <dbReference type="HAMAP-Rule" id="MF_00728"/>
    </source>
</evidence>